<feature type="chain" id="PRO_0000247450" description="C2 domain-containing protein 5">
    <location>
        <begin position="1"/>
        <end position="1000"/>
    </location>
</feature>
<feature type="domain" description="C2" evidence="2">
    <location>
        <begin position="1"/>
        <end position="109"/>
    </location>
</feature>
<feature type="region of interest" description="Disordered" evidence="3">
    <location>
        <begin position="265"/>
        <end position="330"/>
    </location>
</feature>
<feature type="region of interest" description="Disordered" evidence="3">
    <location>
        <begin position="639"/>
        <end position="669"/>
    </location>
</feature>
<feature type="compositionally biased region" description="Polar residues" evidence="3">
    <location>
        <begin position="274"/>
        <end position="289"/>
    </location>
</feature>
<feature type="compositionally biased region" description="Low complexity" evidence="3">
    <location>
        <begin position="290"/>
        <end position="318"/>
    </location>
</feature>
<feature type="compositionally biased region" description="Gly residues" evidence="3">
    <location>
        <begin position="319"/>
        <end position="328"/>
    </location>
</feature>
<feature type="binding site" evidence="2">
    <location>
        <position position="19"/>
    </location>
    <ligand>
        <name>Ca(2+)</name>
        <dbReference type="ChEBI" id="CHEBI:29108"/>
        <label>1</label>
    </ligand>
</feature>
<feature type="binding site" evidence="2">
    <location>
        <position position="19"/>
    </location>
    <ligand>
        <name>Ca(2+)</name>
        <dbReference type="ChEBI" id="CHEBI:29108"/>
        <label>2</label>
    </ligand>
</feature>
<feature type="binding site" evidence="2">
    <location>
        <position position="26"/>
    </location>
    <ligand>
        <name>Ca(2+)</name>
        <dbReference type="ChEBI" id="CHEBI:29108"/>
        <label>1</label>
    </ligand>
</feature>
<feature type="binding site" evidence="2">
    <location>
        <position position="76"/>
    </location>
    <ligand>
        <name>Ca(2+)</name>
        <dbReference type="ChEBI" id="CHEBI:29108"/>
        <label>1</label>
    </ligand>
</feature>
<feature type="binding site" evidence="2">
    <location>
        <position position="76"/>
    </location>
    <ligand>
        <name>Ca(2+)</name>
        <dbReference type="ChEBI" id="CHEBI:29108"/>
        <label>2</label>
    </ligand>
</feature>
<feature type="binding site" evidence="2">
    <location>
        <position position="78"/>
    </location>
    <ligand>
        <name>Ca(2+)</name>
        <dbReference type="ChEBI" id="CHEBI:29108"/>
        <label>1</label>
    </ligand>
</feature>
<feature type="binding site" evidence="2">
    <location>
        <position position="78"/>
    </location>
    <ligand>
        <name>Ca(2+)</name>
        <dbReference type="ChEBI" id="CHEBI:29108"/>
        <label>2</label>
    </ligand>
</feature>
<feature type="binding site" evidence="2">
    <location>
        <position position="78"/>
    </location>
    <ligand>
        <name>Ca(2+)</name>
        <dbReference type="ChEBI" id="CHEBI:29108"/>
        <label>3</label>
    </ligand>
</feature>
<feature type="binding site" evidence="2">
    <location>
        <position position="81"/>
    </location>
    <ligand>
        <name>Ca(2+)</name>
        <dbReference type="ChEBI" id="CHEBI:29108"/>
        <label>3</label>
    </ligand>
</feature>
<feature type="binding site" evidence="2">
    <location>
        <position position="84"/>
    </location>
    <ligand>
        <name>Ca(2+)</name>
        <dbReference type="ChEBI" id="CHEBI:29108"/>
        <label>2</label>
    </ligand>
</feature>
<feature type="binding site" evidence="2">
    <location>
        <position position="84"/>
    </location>
    <ligand>
        <name>Ca(2+)</name>
        <dbReference type="ChEBI" id="CHEBI:29108"/>
        <label>3</label>
    </ligand>
</feature>
<feature type="modified residue" description="Phosphoserine; by PKB/AKT2" evidence="4">
    <location>
        <position position="197"/>
    </location>
</feature>
<feature type="modified residue" description="Phosphoserine" evidence="4">
    <location>
        <position position="200"/>
    </location>
</feature>
<feature type="modified residue" description="Phosphoserine" evidence="15">
    <location>
        <position position="260"/>
    </location>
</feature>
<feature type="modified residue" description="Phosphoserine" evidence="14">
    <location>
        <position position="293"/>
    </location>
</feature>
<feature type="modified residue" description="Phosphoserine" evidence="13 14 15">
    <location>
        <position position="295"/>
    </location>
</feature>
<feature type="modified residue" description="Phosphoserine" evidence="1">
    <location>
        <position position="304"/>
    </location>
</feature>
<feature type="modified residue" description="Phosphoserine" evidence="15">
    <location>
        <position position="305"/>
    </location>
</feature>
<feature type="modified residue" description="Phosphoserine" evidence="1">
    <location>
        <position position="306"/>
    </location>
</feature>
<feature type="modified residue" description="Phosphothreonine" evidence="11">
    <location>
        <position position="317"/>
    </location>
</feature>
<feature type="modified residue" description="Phosphoserine" evidence="15">
    <location>
        <position position="323"/>
    </location>
</feature>
<feature type="modified residue" description="Phosphothreonine" evidence="10">
    <location>
        <position position="601"/>
    </location>
</feature>
<feature type="modified residue" description="Phosphoserine" evidence="8 9 10 11 12">
    <location>
        <position position="643"/>
    </location>
</feature>
<feature type="modified residue" description="Phosphoserine" evidence="1">
    <location>
        <position position="657"/>
    </location>
</feature>
<feature type="modified residue" description="Phosphoserine" evidence="9 12 15">
    <location>
        <position position="659"/>
    </location>
</feature>
<feature type="modified residue" description="Phosphoserine" evidence="1">
    <location>
        <position position="661"/>
    </location>
</feature>
<feature type="modified residue" description="Phosphoserine" evidence="15">
    <location>
        <position position="662"/>
    </location>
</feature>
<feature type="modified residue" description="Phosphothreonine" evidence="16">
    <location>
        <position position="666"/>
    </location>
</feature>
<feature type="modified residue" description="Phosphoserine" evidence="16">
    <location>
        <position position="671"/>
    </location>
</feature>
<feature type="modified residue" description="Phosphothreonine" evidence="15">
    <location>
        <position position="807"/>
    </location>
</feature>
<feature type="modified residue" description="Phosphoserine" evidence="1">
    <location>
        <position position="817"/>
    </location>
</feature>
<feature type="modified residue" description="Phosphoserine" evidence="9 10 11 14 15">
    <location>
        <position position="852"/>
    </location>
</feature>
<feature type="splice variant" id="VSP_028255" description="In isoform 2, isoform 4 and isoform 5." evidence="5 6">
    <original>IPFNEDPNPNTHSSGPSTPLKNQTYSFSPSKSYSRQSSSSDTDLSLTPK</original>
    <variation>SPLVHPPSHGCRSTHNSPIHTATGSRLTQNFSVSVPTLIY</variation>
    <location>
        <begin position="268"/>
        <end position="316"/>
    </location>
</feature>
<feature type="splice variant" id="VSP_055638" description="In isoform 4." evidence="6">
    <original>Q</original>
    <variation>QRGGSPHRFCRR</variation>
    <location>
        <position position="345"/>
    </location>
</feature>
<feature type="splice variant" id="VSP_055639" description="In isoform 5." evidence="5">
    <original>P</original>
    <variation>PAFVGIMGNTRSYKLLDWNSFNS</variation>
    <location>
        <position position="382"/>
    </location>
</feature>
<feature type="splice variant" id="VSP_028256" description="In isoform 2, isoform 3 and isoform 4." evidence="5 6">
    <original>A</original>
    <variation>EHLESASSNSGIPAAQRATSVDYSSFADRCSSWIELIKLKAQTIRRGSIKTT</variation>
    <location>
        <position position="845"/>
    </location>
</feature>
<feature type="splice variant" id="VSP_055640" description="In isoform 5." evidence="5">
    <original>A</original>
    <variation>EHLESASSNSGIPAAQRDRCSSWIELIKLKAQTIRRGSIKTT</variation>
    <location>
        <position position="845"/>
    </location>
</feature>
<feature type="mutagenesis site" description="Reduces calcium-binding, phospholipid membrane-binding and insulin-stimulated SLC2A4/GLUT4 translocation; when associated with A-26; A-76; A-78 and A-84." evidence="4">
    <original>D</original>
    <variation>A</variation>
    <location>
        <position position="19"/>
    </location>
</feature>
<feature type="mutagenesis site" description="Reduces calcium-binding, phospholipid membrane-binding and insulin-stimulated SLC2A4/GLUT4 translocation; when associated with A-19; A-76; A-78 and A-84." evidence="4">
    <original>D</original>
    <variation>A</variation>
    <location>
        <position position="26"/>
    </location>
</feature>
<feature type="mutagenesis site" description="Reduces calcium-binding, phospholipid membrane-binding and insulin-stimulated SLC2A4/GLUT4 translocation; when associated with A-19; A-26; A-78 and A-84." evidence="4">
    <original>D</original>
    <variation>A</variation>
    <location>
        <position position="76"/>
    </location>
</feature>
<feature type="mutagenesis site" description="Reduces calcium-binding, phospholipid membrane-binding and insulin-stimulated SLC2A4/GLUT4 translocation; when associated with A-19; A-26; A-76 and A-84." evidence="4">
    <original>D</original>
    <variation>A</variation>
    <location>
        <position position="78"/>
    </location>
</feature>
<feature type="mutagenesis site" description="Reduces calcium-binding, phospholipid membrane-binding and insulin-stimulated SLC2A4/GLUT4 translocation; when associated with A-19; A-26; A-76 and A-78." evidence="4">
    <original>D</original>
    <variation>A</variation>
    <location>
        <position position="84"/>
    </location>
</feature>
<feature type="mutagenesis site" description="Inhibits insulin-stimulated AKT2-induced phosphorylation, SLC2A4/GLUT4 translocation to the cell surface and GSV-PM fusion." evidence="4">
    <original>S</original>
    <variation>A</variation>
    <location>
        <position position="197"/>
    </location>
</feature>
<feature type="mutagenesis site" description="Does not inhibit insulin-stimulated SLC2A4/GLUT4 translocation." evidence="4">
    <original>S</original>
    <variation>A</variation>
    <location>
        <position position="200"/>
    </location>
</feature>
<feature type="sequence conflict" description="In Ref. 4; BAG58665." evidence="7" ref="4">
    <original>E</original>
    <variation>G</variation>
    <location>
        <position position="997"/>
    </location>
</feature>
<feature type="sequence conflict" description="In Ref. 6; AAI43879." evidence="7" ref="6">
    <original>I</original>
    <variation>F</variation>
    <location sequence="Q86YS7-4">
        <position position="895"/>
    </location>
</feature>
<feature type="sequence conflict" description="In Ref. 4; BAG58665." evidence="7" ref="4">
    <original>S</original>
    <variation>P</variation>
    <location sequence="Q86YS7-5">
        <position position="895"/>
    </location>
</feature>
<evidence type="ECO:0000250" key="1">
    <source>
        <dbReference type="UniProtKB" id="Q7TPS5"/>
    </source>
</evidence>
<evidence type="ECO:0000255" key="2">
    <source>
        <dbReference type="PROSITE-ProRule" id="PRU00041"/>
    </source>
</evidence>
<evidence type="ECO:0000256" key="3">
    <source>
        <dbReference type="SAM" id="MobiDB-lite"/>
    </source>
</evidence>
<evidence type="ECO:0000269" key="4">
    <source>
    </source>
</evidence>
<evidence type="ECO:0000303" key="5">
    <source>
    </source>
</evidence>
<evidence type="ECO:0000303" key="6">
    <source>
    </source>
</evidence>
<evidence type="ECO:0000305" key="7"/>
<evidence type="ECO:0007744" key="8">
    <source>
    </source>
</evidence>
<evidence type="ECO:0007744" key="9">
    <source>
    </source>
</evidence>
<evidence type="ECO:0007744" key="10">
    <source>
    </source>
</evidence>
<evidence type="ECO:0007744" key="11">
    <source>
    </source>
</evidence>
<evidence type="ECO:0007744" key="12">
    <source>
    </source>
</evidence>
<evidence type="ECO:0007744" key="13">
    <source>
    </source>
</evidence>
<evidence type="ECO:0007744" key="14">
    <source>
    </source>
</evidence>
<evidence type="ECO:0007744" key="15">
    <source>
    </source>
</evidence>
<evidence type="ECO:0007744" key="16">
    <source>
    </source>
</evidence>
<comment type="function">
    <text evidence="4">Required for insulin-stimulated glucose transport and glucose transporter SLC2A4/GLUT4 translocation from intracellular glucose storage vesicle (GSV) to the plasma membrane (PM) in adipocytes. Binds phospholipid membranes in a calcium-dependent manner and is necessary for the optimal membrane fusion between SLC2A4/GLUT4 GSV and the PM.</text>
</comment>
<comment type="cofactor">
    <cofactor evidence="2">
        <name>Ca(2+)</name>
        <dbReference type="ChEBI" id="CHEBI:29108"/>
    </cofactor>
    <text evidence="2">Binds 3 Ca(2+) ions per C2 domain.</text>
</comment>
<comment type="interaction">
    <interactant intactId="EBI-12380221">
        <id>Q86YS7-2</id>
    </interactant>
    <interactant intactId="EBI-79165">
        <id>Q9NRD5</id>
        <label>PICK1</label>
    </interactant>
    <organismsDiffer>false</organismsDiffer>
    <experiments>3</experiments>
</comment>
<comment type="subcellular location">
    <subcellularLocation>
        <location evidence="4">Cytoplasmic vesicle membrane</location>
    </subcellularLocation>
    <subcellularLocation>
        <location evidence="4">Cytoplasm</location>
        <location evidence="4">Cell cortex</location>
    </subcellularLocation>
    <subcellularLocation>
        <location evidence="4">Cell membrane</location>
    </subcellularLocation>
    <subcellularLocation>
        <location evidence="4">Cell projection</location>
        <location evidence="4">Ruffle</location>
    </subcellularLocation>
    <text>Dynamically associated with GLUT4-containing glucose storage vesicles (GSV) and plasma membrane in response to insulin stimulation.</text>
</comment>
<comment type="alternative products">
    <event type="alternative splicing"/>
    <isoform>
        <id>Q86YS7-1</id>
        <name>1</name>
        <sequence type="displayed"/>
    </isoform>
    <isoform>
        <id>Q86YS7-2</id>
        <name>2</name>
        <sequence type="described" ref="VSP_028255 VSP_028256"/>
    </isoform>
    <isoform>
        <id>Q86YS7-3</id>
        <name>3</name>
        <sequence type="described" ref="VSP_028256"/>
    </isoform>
    <isoform>
        <id>Q86YS7-4</id>
        <name>4</name>
        <sequence type="described" ref="VSP_028255 VSP_055638 VSP_028256"/>
    </isoform>
    <isoform>
        <id>Q86YS7-5</id>
        <name>5</name>
        <sequence type="described" ref="VSP_028255 VSP_055639 VSP_055640"/>
    </isoform>
</comment>
<comment type="domain">
    <text>The C2 domain binds to calcium and membrane lipids.</text>
</comment>
<comment type="PTM">
    <text evidence="4">Phosphorylated on Ser-197 by active myristoylated kinase AKT2; insulin-stimulated phosphorylation by AKT2 regulates SLC2A4/GLUT4 translocation into the plasma membrane.</text>
</comment>
<comment type="sequence caution" evidence="7">
    <conflict type="erroneous initiation">
        <sequence resource="EMBL-CDS" id="BAA25454"/>
    </conflict>
    <text>Extended N-terminus.</text>
</comment>
<comment type="sequence caution" evidence="7">
    <conflict type="frameshift">
        <sequence resource="EMBL-CDS" id="BAG58665"/>
    </conflict>
</comment>
<name>C2CD5_HUMAN</name>
<gene>
    <name type="primary">C2CD5</name>
    <name type="synonym">CDP138</name>
    <name type="synonym">KIAA0528</name>
</gene>
<proteinExistence type="evidence at protein level"/>
<sequence length="1000" mass="110447">MPGKLKVKIVAGRHLPVMDRASDLTDAFVEVKFGNTTFKTDVYLKSLNPQWNSEWFKFEVDDEDLQDEPLQITVLDHDTYSANDAIGKVYIDIDPLLYSEAATVISGWFPIYDTIHGIRGEINVVVKVDLFNDLNRFRQSSCGVKFFCTTSIPKCYRAVIIHGFVEELVVNEDPEYQWIDRIRTPRASNEARQRLISLMSGELQRKIGLKVLEMRGNAVVGYLQCFDLEGESGLVVRAIGTACTLDKLSSPAAFLPACNSPSKEMKEIPFNEDPNPNTHSSGPSTPLKNQTYSFSPSKSYSRQSSSSDTDLSLTPKTGMGSGSAGKEGGPFKALLRQQTQSALEQREFPFFTLTAFPPGFLVHVGGVVSARSVKLLDRIHNPDEPETRDAWWAEIRQEIKSHAKALGCHAVVGYSESTSICEEVCILSASGTAAVLNPRFLQDGTVEGCLEQRLEENLPTRCGFCHIPYDELNMPFPAHLTYCYNCRKQKVPDVLFTTIDLPTDATVIGKGCLIQARLCRLKKKAQAEANATAISNLLPFMEYEVHTQLMNKLKLKGMNALFGLRIQITVGENMLMGLASATGVYLAALPTPGGIQIAGKTPNDGSYEQHISHMQKKINDTIAKNKELYEINPPEISEEIIGSPIPEPRQRSRLLRSQSESSDEVTELDLSHGKKDAFVLEIDDTDAMEDVHSLLTDVPPPSGFYSCNTEIMPGINNWTSEIQMFTSVRVIRLSSLNLTNQALNKNFNDLCENLLKSLYFKLRSMIPCCLCHVNFTVSLPEDELIQVTVTAVAITFDKNQALQTTKTPVEKSLQRASTDNEELLQFPLELCSDSLPSHPFPPAKAMTVEKASPVGDGNFRNRSAPPCANSTVGVVKMTPLSFIPGAKITKYLGIINMFFIRETTSLREEGGVSGFLHAFIAEVFAMVRAHVAALGGNAVVSYIMKQCVFMENPNKNQAQCLINVSGDAVVFVRESDLEVVSSQQPTTNCQSSCTEGEVTT</sequence>
<protein>
    <recommendedName>
        <fullName>C2 domain-containing protein 5</fullName>
    </recommendedName>
    <alternativeName>
        <fullName>C2 domain-containing phosphoprotein of 138 kDa</fullName>
    </alternativeName>
</protein>
<dbReference type="EMBL" id="AB011100">
    <property type="protein sequence ID" value="BAA25454.3"/>
    <property type="status" value="ALT_INIT"/>
    <property type="molecule type" value="mRNA"/>
</dbReference>
<dbReference type="EMBL" id="AY166851">
    <property type="protein sequence ID" value="AAO17290.1"/>
    <property type="molecule type" value="mRNA"/>
</dbReference>
<dbReference type="EMBL" id="AK295862">
    <property type="protein sequence ID" value="BAG58665.1"/>
    <property type="status" value="ALT_FRAME"/>
    <property type="molecule type" value="mRNA"/>
</dbReference>
<dbReference type="EMBL" id="AK299353">
    <property type="protein sequence ID" value="BAG61349.1"/>
    <property type="molecule type" value="mRNA"/>
</dbReference>
<dbReference type="EMBL" id="AC053513">
    <property type="status" value="NOT_ANNOTATED_CDS"/>
    <property type="molecule type" value="Genomic_DNA"/>
</dbReference>
<dbReference type="EMBL" id="BC042498">
    <property type="protein sequence ID" value="AAH42498.2"/>
    <property type="molecule type" value="mRNA"/>
</dbReference>
<dbReference type="EMBL" id="BC053885">
    <property type="protein sequence ID" value="AAH53885.1"/>
    <property type="molecule type" value="mRNA"/>
</dbReference>
<dbReference type="EMBL" id="BC117143">
    <property type="protein sequence ID" value="AAI17144.1"/>
    <property type="molecule type" value="mRNA"/>
</dbReference>
<dbReference type="EMBL" id="BC143878">
    <property type="protein sequence ID" value="AAI43879.1"/>
    <property type="molecule type" value="mRNA"/>
</dbReference>
<dbReference type="CCDS" id="CCDS31758.1">
    <molecule id="Q86YS7-1"/>
</dbReference>
<dbReference type="CCDS" id="CCDS66337.1">
    <molecule id="Q86YS7-3"/>
</dbReference>
<dbReference type="CCDS" id="CCDS66338.1">
    <molecule id="Q86YS7-2"/>
</dbReference>
<dbReference type="CCDS" id="CCDS66339.1">
    <molecule id="Q86YS7-5"/>
</dbReference>
<dbReference type="CCDS" id="CCDS66340.1">
    <molecule id="Q86YS7-4"/>
</dbReference>
<dbReference type="PIR" id="T00072">
    <property type="entry name" value="T00072"/>
</dbReference>
<dbReference type="RefSeq" id="NP_001273102.1">
    <molecule id="Q86YS7-4"/>
    <property type="nucleotide sequence ID" value="NM_001286173.2"/>
</dbReference>
<dbReference type="RefSeq" id="NP_001273103.1">
    <molecule id="Q86YS7-3"/>
    <property type="nucleotide sequence ID" value="NM_001286174.3"/>
</dbReference>
<dbReference type="RefSeq" id="NP_001273104.1">
    <molecule id="Q86YS7-5"/>
    <property type="nucleotide sequence ID" value="NM_001286175.2"/>
</dbReference>
<dbReference type="RefSeq" id="NP_001273105.1">
    <molecule id="Q86YS7-3"/>
    <property type="nucleotide sequence ID" value="NM_001286176.2"/>
</dbReference>
<dbReference type="RefSeq" id="NP_001273106.1">
    <molecule id="Q86YS7-2"/>
    <property type="nucleotide sequence ID" value="NM_001286177.2"/>
</dbReference>
<dbReference type="RefSeq" id="NP_055617.1">
    <molecule id="Q86YS7-1"/>
    <property type="nucleotide sequence ID" value="NM_014802.3"/>
</dbReference>
<dbReference type="SMR" id="Q86YS7"/>
<dbReference type="BioGRID" id="115182">
    <property type="interactions" value="98"/>
</dbReference>
<dbReference type="FunCoup" id="Q86YS7">
    <property type="interactions" value="3535"/>
</dbReference>
<dbReference type="IntAct" id="Q86YS7">
    <property type="interactions" value="50"/>
</dbReference>
<dbReference type="STRING" id="9606.ENSP00000443204"/>
<dbReference type="GlyGen" id="Q86YS7">
    <property type="glycosylation" value="2 sites, 1 O-linked glycan (1 site)"/>
</dbReference>
<dbReference type="iPTMnet" id="Q86YS7"/>
<dbReference type="PhosphoSitePlus" id="Q86YS7"/>
<dbReference type="SwissPalm" id="Q86YS7"/>
<dbReference type="BioMuta" id="C2CD5"/>
<dbReference type="DMDM" id="74750574"/>
<dbReference type="jPOST" id="Q86YS7"/>
<dbReference type="MassIVE" id="Q86YS7"/>
<dbReference type="PeptideAtlas" id="Q86YS7"/>
<dbReference type="ProteomicsDB" id="25908"/>
<dbReference type="ProteomicsDB" id="26956"/>
<dbReference type="ProteomicsDB" id="4964"/>
<dbReference type="ProteomicsDB" id="70464">
    <molecule id="Q86YS7-1"/>
</dbReference>
<dbReference type="ProteomicsDB" id="70465">
    <molecule id="Q86YS7-2"/>
</dbReference>
<dbReference type="Pumba" id="Q86YS7"/>
<dbReference type="Antibodypedia" id="24138">
    <property type="antibodies" value="56 antibodies from 18 providers"/>
</dbReference>
<dbReference type="DNASU" id="9847"/>
<dbReference type="Ensembl" id="ENST00000333957.8">
    <molecule id="Q86YS7-1"/>
    <property type="protein sequence ID" value="ENSP00000334229.4"/>
    <property type="gene ID" value="ENSG00000111731.13"/>
</dbReference>
<dbReference type="Ensembl" id="ENST00000396028.6">
    <molecule id="Q86YS7-2"/>
    <property type="protein sequence ID" value="ENSP00000379345.2"/>
    <property type="gene ID" value="ENSG00000111731.13"/>
</dbReference>
<dbReference type="Ensembl" id="ENST00000446597.6">
    <molecule id="Q86YS7-3"/>
    <property type="protein sequence ID" value="ENSP00000388756.1"/>
    <property type="gene ID" value="ENSG00000111731.13"/>
</dbReference>
<dbReference type="Ensembl" id="ENST00000536386.5">
    <molecule id="Q86YS7-4"/>
    <property type="protein sequence ID" value="ENSP00000439392.1"/>
    <property type="gene ID" value="ENSG00000111731.13"/>
</dbReference>
<dbReference type="Ensembl" id="ENST00000542676.5">
    <molecule id="Q86YS7-3"/>
    <property type="protein sequence ID" value="ENSP00000441951.1"/>
    <property type="gene ID" value="ENSG00000111731.13"/>
</dbReference>
<dbReference type="Ensembl" id="ENST00000545552.5">
    <molecule id="Q86YS7-5"/>
    <property type="protein sequence ID" value="ENSP00000443204.1"/>
    <property type="gene ID" value="ENSG00000111731.13"/>
</dbReference>
<dbReference type="GeneID" id="9847"/>
<dbReference type="KEGG" id="hsa:9847"/>
<dbReference type="MANE-Select" id="ENST00000446597.6">
    <molecule id="Q86YS7-3"/>
    <property type="protein sequence ID" value="ENSP00000388756.1"/>
    <property type="RefSeq nucleotide sequence ID" value="NM_001286176.2"/>
    <property type="RefSeq protein sequence ID" value="NP_001273105.1"/>
</dbReference>
<dbReference type="UCSC" id="uc001rfq.5">
    <molecule id="Q86YS7-1"/>
    <property type="organism name" value="human"/>
</dbReference>
<dbReference type="AGR" id="HGNC:29062"/>
<dbReference type="CTD" id="9847"/>
<dbReference type="DisGeNET" id="9847"/>
<dbReference type="GeneCards" id="C2CD5"/>
<dbReference type="HGNC" id="HGNC:29062">
    <property type="gene designation" value="C2CD5"/>
</dbReference>
<dbReference type="HPA" id="ENSG00000111731">
    <property type="expression patterns" value="Low tissue specificity"/>
</dbReference>
<dbReference type="MIM" id="618044">
    <property type="type" value="gene"/>
</dbReference>
<dbReference type="neXtProt" id="NX_Q86YS7"/>
<dbReference type="OpenTargets" id="ENSG00000111731"/>
<dbReference type="PharmGKB" id="PA143485515"/>
<dbReference type="VEuPathDB" id="HostDB:ENSG00000111731"/>
<dbReference type="eggNOG" id="KOG1031">
    <property type="taxonomic scope" value="Eukaryota"/>
</dbReference>
<dbReference type="GeneTree" id="ENSGT00390000000212"/>
<dbReference type="HOGENOM" id="CLU_003204_0_0_1"/>
<dbReference type="InParanoid" id="Q86YS7"/>
<dbReference type="OMA" id="TMFYLES"/>
<dbReference type="OrthoDB" id="419768at2759"/>
<dbReference type="PAN-GO" id="Q86YS7">
    <property type="GO annotations" value="8 GO annotations based on evolutionary models"/>
</dbReference>
<dbReference type="PhylomeDB" id="Q86YS7"/>
<dbReference type="TreeFam" id="TF323431"/>
<dbReference type="PathwayCommons" id="Q86YS7"/>
<dbReference type="Reactome" id="R-HSA-1445148">
    <property type="pathway name" value="Translocation of SLC2A4 (GLUT4) to the plasma membrane"/>
</dbReference>
<dbReference type="SignaLink" id="Q86YS7"/>
<dbReference type="BioGRID-ORCS" id="9847">
    <property type="hits" value="11 hits in 1153 CRISPR screens"/>
</dbReference>
<dbReference type="CD-CODE" id="FB4E32DD">
    <property type="entry name" value="Presynaptic clusters and postsynaptic densities"/>
</dbReference>
<dbReference type="ChiTaRS" id="C2CD5">
    <property type="organism name" value="human"/>
</dbReference>
<dbReference type="GenomeRNAi" id="9847"/>
<dbReference type="Pharos" id="Q86YS7">
    <property type="development level" value="Tbio"/>
</dbReference>
<dbReference type="PRO" id="PR:Q86YS7"/>
<dbReference type="Proteomes" id="UP000005640">
    <property type="component" value="Chromosome 12"/>
</dbReference>
<dbReference type="RNAct" id="Q86YS7">
    <property type="molecule type" value="protein"/>
</dbReference>
<dbReference type="Bgee" id="ENSG00000111731">
    <property type="expression patterns" value="Expressed in secondary oocyte and 209 other cell types or tissues"/>
</dbReference>
<dbReference type="ExpressionAtlas" id="Q86YS7">
    <property type="expression patterns" value="baseline and differential"/>
</dbReference>
<dbReference type="GO" id="GO:0005938">
    <property type="term" value="C:cell cortex"/>
    <property type="evidence" value="ECO:0000314"/>
    <property type="project" value="UniProtKB"/>
</dbReference>
<dbReference type="GO" id="GO:0034451">
    <property type="term" value="C:centriolar satellite"/>
    <property type="evidence" value="ECO:0000314"/>
    <property type="project" value="HPA"/>
</dbReference>
<dbReference type="GO" id="GO:0030659">
    <property type="term" value="C:cytoplasmic vesicle membrane"/>
    <property type="evidence" value="ECO:0000314"/>
    <property type="project" value="UniProtKB"/>
</dbReference>
<dbReference type="GO" id="GO:0005829">
    <property type="term" value="C:cytosol"/>
    <property type="evidence" value="ECO:0000314"/>
    <property type="project" value="HPA"/>
</dbReference>
<dbReference type="GO" id="GO:0005886">
    <property type="term" value="C:plasma membrane"/>
    <property type="evidence" value="ECO:0000314"/>
    <property type="project" value="UniProtKB"/>
</dbReference>
<dbReference type="GO" id="GO:0032587">
    <property type="term" value="C:ruffle membrane"/>
    <property type="evidence" value="ECO:0000314"/>
    <property type="project" value="UniProtKB"/>
</dbReference>
<dbReference type="GO" id="GO:0005509">
    <property type="term" value="F:calcium ion binding"/>
    <property type="evidence" value="ECO:0000314"/>
    <property type="project" value="UniProtKB"/>
</dbReference>
<dbReference type="GO" id="GO:0005544">
    <property type="term" value="F:calcium-dependent phospholipid binding"/>
    <property type="evidence" value="ECO:0000314"/>
    <property type="project" value="UniProtKB"/>
</dbReference>
<dbReference type="GO" id="GO:0008286">
    <property type="term" value="P:insulin receptor signaling pathway"/>
    <property type="evidence" value="ECO:0000314"/>
    <property type="project" value="UniProtKB"/>
</dbReference>
<dbReference type="GO" id="GO:0065002">
    <property type="term" value="P:intracellular protein transmembrane transport"/>
    <property type="evidence" value="ECO:0000315"/>
    <property type="project" value="UniProtKB"/>
</dbReference>
<dbReference type="GO" id="GO:0010828">
    <property type="term" value="P:positive regulation of D-glucose transmembrane transport"/>
    <property type="evidence" value="ECO:0000250"/>
    <property type="project" value="UniProtKB"/>
</dbReference>
<dbReference type="GO" id="GO:0090314">
    <property type="term" value="P:positive regulation of protein targeting to membrane"/>
    <property type="evidence" value="ECO:0000315"/>
    <property type="project" value="UniProtKB"/>
</dbReference>
<dbReference type="GO" id="GO:0031340">
    <property type="term" value="P:positive regulation of vesicle fusion"/>
    <property type="evidence" value="ECO:0000315"/>
    <property type="project" value="UniProtKB"/>
</dbReference>
<dbReference type="GO" id="GO:0072659">
    <property type="term" value="P:protein localization to plasma membrane"/>
    <property type="evidence" value="ECO:0000318"/>
    <property type="project" value="GO_Central"/>
</dbReference>
<dbReference type="CDD" id="cd08688">
    <property type="entry name" value="C2_KIAA0528-like"/>
    <property type="match status" value="1"/>
</dbReference>
<dbReference type="FunFam" id="2.60.40.150:FF:000020">
    <property type="entry name" value="C2 calcium dependent domain containing 5"/>
    <property type="match status" value="1"/>
</dbReference>
<dbReference type="Gene3D" id="2.60.40.150">
    <property type="entry name" value="C2 domain"/>
    <property type="match status" value="1"/>
</dbReference>
<dbReference type="InterPro" id="IPR037785">
    <property type="entry name" value="C2_C2CD5"/>
</dbReference>
<dbReference type="InterPro" id="IPR000008">
    <property type="entry name" value="C2_dom"/>
</dbReference>
<dbReference type="InterPro" id="IPR035892">
    <property type="entry name" value="C2_domain_sf"/>
</dbReference>
<dbReference type="InterPro" id="IPR038983">
    <property type="entry name" value="C2CD5"/>
</dbReference>
<dbReference type="InterPro" id="IPR056430">
    <property type="entry name" value="C2CD5_YbjQ-like_dom"/>
</dbReference>
<dbReference type="InterPro" id="IPR056431">
    <property type="entry name" value="C2CD5_YbjQ-rel_dom"/>
</dbReference>
<dbReference type="PANTHER" id="PTHR37412">
    <property type="entry name" value="C2 DOMAIN-CONTAINING PROTEIN 5"/>
    <property type="match status" value="1"/>
</dbReference>
<dbReference type="PANTHER" id="PTHR37412:SF2">
    <property type="entry name" value="C2 DOMAIN-CONTAINING PROTEIN 5"/>
    <property type="match status" value="1"/>
</dbReference>
<dbReference type="Pfam" id="PF00168">
    <property type="entry name" value="C2"/>
    <property type="match status" value="1"/>
</dbReference>
<dbReference type="Pfam" id="PF23025">
    <property type="entry name" value="YbjQ_2"/>
    <property type="match status" value="4"/>
</dbReference>
<dbReference type="Pfam" id="PF23028">
    <property type="entry name" value="YbjQ_3"/>
    <property type="match status" value="1"/>
</dbReference>
<dbReference type="SMART" id="SM00239">
    <property type="entry name" value="C2"/>
    <property type="match status" value="1"/>
</dbReference>
<dbReference type="SUPFAM" id="SSF49562">
    <property type="entry name" value="C2 domain (Calcium/lipid-binding domain, CaLB)"/>
    <property type="match status" value="1"/>
</dbReference>
<dbReference type="PROSITE" id="PS50004">
    <property type="entry name" value="C2"/>
    <property type="match status" value="1"/>
</dbReference>
<reference key="1">
    <citation type="journal article" date="1998" name="DNA Res.">
        <title>Prediction of the coding sequences of unidentified human genes. IX. The complete sequences of 100 new cDNA clones from brain which can code for large proteins in vitro.</title>
        <authorList>
            <person name="Nagase T."/>
            <person name="Ishikawa K."/>
            <person name="Miyajima N."/>
            <person name="Tanaka A."/>
            <person name="Kotani H."/>
            <person name="Nomura N."/>
            <person name="Ohara O."/>
        </authorList>
    </citation>
    <scope>NUCLEOTIDE SEQUENCE [LARGE SCALE MRNA] (ISOFORM 1)</scope>
    <source>
        <tissue>Brain</tissue>
    </source>
</reference>
<reference key="2">
    <citation type="submission" date="2005-01" db="EMBL/GenBank/DDBJ databases">
        <authorList>
            <person name="Ohara O."/>
            <person name="Nagase T."/>
            <person name="Ishikawa K."/>
        </authorList>
    </citation>
    <scope>SEQUENCE REVISION</scope>
</reference>
<reference key="3">
    <citation type="submission" date="2002-10" db="EMBL/GenBank/DDBJ databases">
        <authorList>
            <person name="Guo J.H."/>
            <person name="Yu L."/>
        </authorList>
    </citation>
    <scope>NUCLEOTIDE SEQUENCE [LARGE SCALE MRNA] (ISOFORM 1)</scope>
    <source>
        <tissue>Brain</tissue>
    </source>
</reference>
<reference key="4">
    <citation type="journal article" date="2004" name="Nat. Genet.">
        <title>Complete sequencing and characterization of 21,243 full-length human cDNAs.</title>
        <authorList>
            <person name="Ota T."/>
            <person name="Suzuki Y."/>
            <person name="Nishikawa T."/>
            <person name="Otsuki T."/>
            <person name="Sugiyama T."/>
            <person name="Irie R."/>
            <person name="Wakamatsu A."/>
            <person name="Hayashi K."/>
            <person name="Sato H."/>
            <person name="Nagai K."/>
            <person name="Kimura K."/>
            <person name="Makita H."/>
            <person name="Sekine M."/>
            <person name="Obayashi M."/>
            <person name="Nishi T."/>
            <person name="Shibahara T."/>
            <person name="Tanaka T."/>
            <person name="Ishii S."/>
            <person name="Yamamoto J."/>
            <person name="Saito K."/>
            <person name="Kawai Y."/>
            <person name="Isono Y."/>
            <person name="Nakamura Y."/>
            <person name="Nagahari K."/>
            <person name="Murakami K."/>
            <person name="Yasuda T."/>
            <person name="Iwayanagi T."/>
            <person name="Wagatsuma M."/>
            <person name="Shiratori A."/>
            <person name="Sudo H."/>
            <person name="Hosoiri T."/>
            <person name="Kaku Y."/>
            <person name="Kodaira H."/>
            <person name="Kondo H."/>
            <person name="Sugawara M."/>
            <person name="Takahashi M."/>
            <person name="Kanda K."/>
            <person name="Yokoi T."/>
            <person name="Furuya T."/>
            <person name="Kikkawa E."/>
            <person name="Omura Y."/>
            <person name="Abe K."/>
            <person name="Kamihara K."/>
            <person name="Katsuta N."/>
            <person name="Sato K."/>
            <person name="Tanikawa M."/>
            <person name="Yamazaki M."/>
            <person name="Ninomiya K."/>
            <person name="Ishibashi T."/>
            <person name="Yamashita H."/>
            <person name="Murakawa K."/>
            <person name="Fujimori K."/>
            <person name="Tanai H."/>
            <person name="Kimata M."/>
            <person name="Watanabe M."/>
            <person name="Hiraoka S."/>
            <person name="Chiba Y."/>
            <person name="Ishida S."/>
            <person name="Ono Y."/>
            <person name="Takiguchi S."/>
            <person name="Watanabe S."/>
            <person name="Yosida M."/>
            <person name="Hotuta T."/>
            <person name="Kusano J."/>
            <person name="Kanehori K."/>
            <person name="Takahashi-Fujii A."/>
            <person name="Hara H."/>
            <person name="Tanase T.-O."/>
            <person name="Nomura Y."/>
            <person name="Togiya S."/>
            <person name="Komai F."/>
            <person name="Hara R."/>
            <person name="Takeuchi K."/>
            <person name="Arita M."/>
            <person name="Imose N."/>
            <person name="Musashino K."/>
            <person name="Yuuki H."/>
            <person name="Oshima A."/>
            <person name="Sasaki N."/>
            <person name="Aotsuka S."/>
            <person name="Yoshikawa Y."/>
            <person name="Matsunawa H."/>
            <person name="Ichihara T."/>
            <person name="Shiohata N."/>
            <person name="Sano S."/>
            <person name="Moriya S."/>
            <person name="Momiyama H."/>
            <person name="Satoh N."/>
            <person name="Takami S."/>
            <person name="Terashima Y."/>
            <person name="Suzuki O."/>
            <person name="Nakagawa S."/>
            <person name="Senoh A."/>
            <person name="Mizoguchi H."/>
            <person name="Goto Y."/>
            <person name="Shimizu F."/>
            <person name="Wakebe H."/>
            <person name="Hishigaki H."/>
            <person name="Watanabe T."/>
            <person name="Sugiyama A."/>
            <person name="Takemoto M."/>
            <person name="Kawakami B."/>
            <person name="Yamazaki M."/>
            <person name="Watanabe K."/>
            <person name="Kumagai A."/>
            <person name="Itakura S."/>
            <person name="Fukuzumi Y."/>
            <person name="Fujimori Y."/>
            <person name="Komiyama M."/>
            <person name="Tashiro H."/>
            <person name="Tanigami A."/>
            <person name="Fujiwara T."/>
            <person name="Ono T."/>
            <person name="Yamada K."/>
            <person name="Fujii Y."/>
            <person name="Ozaki K."/>
            <person name="Hirao M."/>
            <person name="Ohmori Y."/>
            <person name="Kawabata A."/>
            <person name="Hikiji T."/>
            <person name="Kobatake N."/>
            <person name="Inagaki H."/>
            <person name="Ikema Y."/>
            <person name="Okamoto S."/>
            <person name="Okitani R."/>
            <person name="Kawakami T."/>
            <person name="Noguchi S."/>
            <person name="Itoh T."/>
            <person name="Shigeta K."/>
            <person name="Senba T."/>
            <person name="Matsumura K."/>
            <person name="Nakajima Y."/>
            <person name="Mizuno T."/>
            <person name="Morinaga M."/>
            <person name="Sasaki M."/>
            <person name="Togashi T."/>
            <person name="Oyama M."/>
            <person name="Hata H."/>
            <person name="Watanabe M."/>
            <person name="Komatsu T."/>
            <person name="Mizushima-Sugano J."/>
            <person name="Satoh T."/>
            <person name="Shirai Y."/>
            <person name="Takahashi Y."/>
            <person name="Nakagawa K."/>
            <person name="Okumura K."/>
            <person name="Nagase T."/>
            <person name="Nomura N."/>
            <person name="Kikuchi H."/>
            <person name="Masuho Y."/>
            <person name="Yamashita R."/>
            <person name="Nakai K."/>
            <person name="Yada T."/>
            <person name="Nakamura Y."/>
            <person name="Ohara O."/>
            <person name="Isogai T."/>
            <person name="Sugano S."/>
        </authorList>
    </citation>
    <scope>NUCLEOTIDE SEQUENCE [LARGE SCALE MRNA] (ISOFORMS 3 AND 5)</scope>
    <source>
        <tissue>Hippocampus</tissue>
    </source>
</reference>
<reference key="5">
    <citation type="journal article" date="2006" name="Nature">
        <title>The finished DNA sequence of human chromosome 12.</title>
        <authorList>
            <person name="Scherer S.E."/>
            <person name="Muzny D.M."/>
            <person name="Buhay C.J."/>
            <person name="Chen R."/>
            <person name="Cree A."/>
            <person name="Ding Y."/>
            <person name="Dugan-Rocha S."/>
            <person name="Gill R."/>
            <person name="Gunaratne P."/>
            <person name="Harris R.A."/>
            <person name="Hawes A.C."/>
            <person name="Hernandez J."/>
            <person name="Hodgson A.V."/>
            <person name="Hume J."/>
            <person name="Jackson A."/>
            <person name="Khan Z.M."/>
            <person name="Kovar-Smith C."/>
            <person name="Lewis L.R."/>
            <person name="Lozado R.J."/>
            <person name="Metzker M.L."/>
            <person name="Milosavljevic A."/>
            <person name="Miner G.R."/>
            <person name="Montgomery K.T."/>
            <person name="Morgan M.B."/>
            <person name="Nazareth L.V."/>
            <person name="Scott G."/>
            <person name="Sodergren E."/>
            <person name="Song X.-Z."/>
            <person name="Steffen D."/>
            <person name="Lovering R.C."/>
            <person name="Wheeler D.A."/>
            <person name="Worley K.C."/>
            <person name="Yuan Y."/>
            <person name="Zhang Z."/>
            <person name="Adams C.Q."/>
            <person name="Ansari-Lari M.A."/>
            <person name="Ayele M."/>
            <person name="Brown M.J."/>
            <person name="Chen G."/>
            <person name="Chen Z."/>
            <person name="Clerc-Blankenburg K.P."/>
            <person name="Davis C."/>
            <person name="Delgado O."/>
            <person name="Dinh H.H."/>
            <person name="Draper H."/>
            <person name="Gonzalez-Garay M.L."/>
            <person name="Havlak P."/>
            <person name="Jackson L.R."/>
            <person name="Jacob L.S."/>
            <person name="Kelly S.H."/>
            <person name="Li L."/>
            <person name="Li Z."/>
            <person name="Liu J."/>
            <person name="Liu W."/>
            <person name="Lu J."/>
            <person name="Maheshwari M."/>
            <person name="Nguyen B.-V."/>
            <person name="Okwuonu G.O."/>
            <person name="Pasternak S."/>
            <person name="Perez L.M."/>
            <person name="Plopper F.J.H."/>
            <person name="Santibanez J."/>
            <person name="Shen H."/>
            <person name="Tabor P.E."/>
            <person name="Verduzco D."/>
            <person name="Waldron L."/>
            <person name="Wang Q."/>
            <person name="Williams G.A."/>
            <person name="Zhang J."/>
            <person name="Zhou J."/>
            <person name="Allen C.C."/>
            <person name="Amin A.G."/>
            <person name="Anyalebechi V."/>
            <person name="Bailey M."/>
            <person name="Barbaria J.A."/>
            <person name="Bimage K.E."/>
            <person name="Bryant N.P."/>
            <person name="Burch P.E."/>
            <person name="Burkett C.E."/>
            <person name="Burrell K.L."/>
            <person name="Calderon E."/>
            <person name="Cardenas V."/>
            <person name="Carter K."/>
            <person name="Casias K."/>
            <person name="Cavazos I."/>
            <person name="Cavazos S.R."/>
            <person name="Ceasar H."/>
            <person name="Chacko J."/>
            <person name="Chan S.N."/>
            <person name="Chavez D."/>
            <person name="Christopoulos C."/>
            <person name="Chu J."/>
            <person name="Cockrell R."/>
            <person name="Cox C.D."/>
            <person name="Dang M."/>
            <person name="Dathorne S.R."/>
            <person name="David R."/>
            <person name="Davis C.M."/>
            <person name="Davy-Carroll L."/>
            <person name="Deshazo D.R."/>
            <person name="Donlin J.E."/>
            <person name="D'Souza L."/>
            <person name="Eaves K.A."/>
            <person name="Egan A."/>
            <person name="Emery-Cohen A.J."/>
            <person name="Escotto M."/>
            <person name="Flagg N."/>
            <person name="Forbes L.D."/>
            <person name="Gabisi A.M."/>
            <person name="Garza M."/>
            <person name="Hamilton C."/>
            <person name="Henderson N."/>
            <person name="Hernandez O."/>
            <person name="Hines S."/>
            <person name="Hogues M.E."/>
            <person name="Huang M."/>
            <person name="Idlebird D.G."/>
            <person name="Johnson R."/>
            <person name="Jolivet A."/>
            <person name="Jones S."/>
            <person name="Kagan R."/>
            <person name="King L.M."/>
            <person name="Leal B."/>
            <person name="Lebow H."/>
            <person name="Lee S."/>
            <person name="LeVan J.M."/>
            <person name="Lewis L.C."/>
            <person name="London P."/>
            <person name="Lorensuhewa L.M."/>
            <person name="Loulseged H."/>
            <person name="Lovett D.A."/>
            <person name="Lucier A."/>
            <person name="Lucier R.L."/>
            <person name="Ma J."/>
            <person name="Madu R.C."/>
            <person name="Mapua P."/>
            <person name="Martindale A.D."/>
            <person name="Martinez E."/>
            <person name="Massey E."/>
            <person name="Mawhiney S."/>
            <person name="Meador M.G."/>
            <person name="Mendez S."/>
            <person name="Mercado C."/>
            <person name="Mercado I.C."/>
            <person name="Merritt C.E."/>
            <person name="Miner Z.L."/>
            <person name="Minja E."/>
            <person name="Mitchell T."/>
            <person name="Mohabbat F."/>
            <person name="Mohabbat K."/>
            <person name="Montgomery B."/>
            <person name="Moore N."/>
            <person name="Morris S."/>
            <person name="Munidasa M."/>
            <person name="Ngo R.N."/>
            <person name="Nguyen N.B."/>
            <person name="Nickerson E."/>
            <person name="Nwaokelemeh O.O."/>
            <person name="Nwokenkwo S."/>
            <person name="Obregon M."/>
            <person name="Oguh M."/>
            <person name="Oragunye N."/>
            <person name="Oviedo R.J."/>
            <person name="Parish B.J."/>
            <person name="Parker D.N."/>
            <person name="Parrish J."/>
            <person name="Parks K.L."/>
            <person name="Paul H.A."/>
            <person name="Payton B.A."/>
            <person name="Perez A."/>
            <person name="Perrin W."/>
            <person name="Pickens A."/>
            <person name="Primus E.L."/>
            <person name="Pu L.-L."/>
            <person name="Puazo M."/>
            <person name="Quiles M.M."/>
            <person name="Quiroz J.B."/>
            <person name="Rabata D."/>
            <person name="Reeves K."/>
            <person name="Ruiz S.J."/>
            <person name="Shao H."/>
            <person name="Sisson I."/>
            <person name="Sonaike T."/>
            <person name="Sorelle R.P."/>
            <person name="Sutton A.E."/>
            <person name="Svatek A.F."/>
            <person name="Svetz L.A."/>
            <person name="Tamerisa K.S."/>
            <person name="Taylor T.R."/>
            <person name="Teague B."/>
            <person name="Thomas N."/>
            <person name="Thorn R.D."/>
            <person name="Trejos Z.Y."/>
            <person name="Trevino B.K."/>
            <person name="Ukegbu O.N."/>
            <person name="Urban J.B."/>
            <person name="Vasquez L.I."/>
            <person name="Vera V.A."/>
            <person name="Villasana D.M."/>
            <person name="Wang L."/>
            <person name="Ward-Moore S."/>
            <person name="Warren J.T."/>
            <person name="Wei X."/>
            <person name="White F."/>
            <person name="Williamson A.L."/>
            <person name="Wleczyk R."/>
            <person name="Wooden H.S."/>
            <person name="Wooden S.H."/>
            <person name="Yen J."/>
            <person name="Yoon L."/>
            <person name="Yoon V."/>
            <person name="Zorrilla S.E."/>
            <person name="Nelson D."/>
            <person name="Kucherlapati R."/>
            <person name="Weinstock G."/>
            <person name="Gibbs R.A."/>
        </authorList>
    </citation>
    <scope>NUCLEOTIDE SEQUENCE [LARGE SCALE GENOMIC DNA]</scope>
</reference>
<reference key="6">
    <citation type="journal article" date="2004" name="Genome Res.">
        <title>The status, quality, and expansion of the NIH full-length cDNA project: the Mammalian Gene Collection (MGC).</title>
        <authorList>
            <consortium name="The MGC Project Team"/>
        </authorList>
    </citation>
    <scope>NUCLEOTIDE SEQUENCE [LARGE SCALE MRNA] (ISOFORMS 1; 2 AND 4)</scope>
    <source>
        <tissue>Brain</tissue>
        <tissue>Cerebellum</tissue>
        <tissue>Lung carcinoma</tissue>
    </source>
</reference>
<reference key="7">
    <citation type="journal article" date="2006" name="Cell">
        <title>Global, in vivo, and site-specific phosphorylation dynamics in signaling networks.</title>
        <authorList>
            <person name="Olsen J.V."/>
            <person name="Blagoev B."/>
            <person name="Gnad F."/>
            <person name="Macek B."/>
            <person name="Kumar C."/>
            <person name="Mortensen P."/>
            <person name="Mann M."/>
        </authorList>
    </citation>
    <scope>IDENTIFICATION BY MASS SPECTROMETRY [LARGE SCALE ANALYSIS]</scope>
    <source>
        <tissue>Cervix carcinoma</tissue>
    </source>
</reference>
<reference key="8">
    <citation type="journal article" date="2008" name="J. Proteome Res.">
        <title>Combining protein-based IMAC, peptide-based IMAC, and MudPIT for efficient phosphoproteomic analysis.</title>
        <authorList>
            <person name="Cantin G.T."/>
            <person name="Yi W."/>
            <person name="Lu B."/>
            <person name="Park S.K."/>
            <person name="Xu T."/>
            <person name="Lee J.-D."/>
            <person name="Yates J.R. III"/>
        </authorList>
    </citation>
    <scope>PHOSPHORYLATION [LARGE SCALE ANALYSIS] AT SER-643</scope>
    <scope>IDENTIFICATION BY MASS SPECTROMETRY [LARGE SCALE ANALYSIS]</scope>
    <source>
        <tissue>Cervix carcinoma</tissue>
    </source>
</reference>
<reference key="9">
    <citation type="journal article" date="2008" name="Mol. Cell">
        <title>Kinase-selective enrichment enables quantitative phosphoproteomics of the kinome across the cell cycle.</title>
        <authorList>
            <person name="Daub H."/>
            <person name="Olsen J.V."/>
            <person name="Bairlein M."/>
            <person name="Gnad F."/>
            <person name="Oppermann F.S."/>
            <person name="Korner R."/>
            <person name="Greff Z."/>
            <person name="Keri G."/>
            <person name="Stemmann O."/>
            <person name="Mann M."/>
        </authorList>
    </citation>
    <scope>PHOSPHORYLATION [LARGE SCALE ANALYSIS] AT THR-601; SER-643 AND SER-852</scope>
    <scope>IDENTIFICATION BY MASS SPECTROMETRY [LARGE SCALE ANALYSIS]</scope>
    <source>
        <tissue>Cervix carcinoma</tissue>
    </source>
</reference>
<reference key="10">
    <citation type="journal article" date="2008" name="Proc. Natl. Acad. Sci. U.S.A.">
        <title>A quantitative atlas of mitotic phosphorylation.</title>
        <authorList>
            <person name="Dephoure N."/>
            <person name="Zhou C."/>
            <person name="Villen J."/>
            <person name="Beausoleil S.A."/>
            <person name="Bakalarski C.E."/>
            <person name="Elledge S.J."/>
            <person name="Gygi S.P."/>
        </authorList>
    </citation>
    <scope>PHOSPHORYLATION [LARGE SCALE ANALYSIS] AT SER-643; SER-659 AND SER-852</scope>
    <scope>IDENTIFICATION BY MASS SPECTROMETRY [LARGE SCALE ANALYSIS]</scope>
    <source>
        <tissue>Cervix carcinoma</tissue>
    </source>
</reference>
<reference key="11">
    <citation type="journal article" date="2009" name="Anal. Chem.">
        <title>Lys-N and trypsin cover complementary parts of the phosphoproteome in a refined SCX-based approach.</title>
        <authorList>
            <person name="Gauci S."/>
            <person name="Helbig A.O."/>
            <person name="Slijper M."/>
            <person name="Krijgsveld J."/>
            <person name="Heck A.J."/>
            <person name="Mohammed S."/>
        </authorList>
    </citation>
    <scope>IDENTIFICATION BY MASS SPECTROMETRY [LARGE SCALE ANALYSIS]</scope>
</reference>
<reference key="12">
    <citation type="journal article" date="2009" name="Mol. Cell. Proteomics">
        <title>Large-scale proteomics analysis of the human kinome.</title>
        <authorList>
            <person name="Oppermann F.S."/>
            <person name="Gnad F."/>
            <person name="Olsen J.V."/>
            <person name="Hornberger R."/>
            <person name="Greff Z."/>
            <person name="Keri G."/>
            <person name="Mann M."/>
            <person name="Daub H."/>
        </authorList>
    </citation>
    <scope>PHOSPHORYLATION [LARGE SCALE ANALYSIS] AT THR-317; SER-643 AND SER-852</scope>
    <scope>IDENTIFICATION BY MASS SPECTROMETRY [LARGE SCALE ANALYSIS]</scope>
</reference>
<reference key="13">
    <citation type="journal article" date="2009" name="Sci. Signal.">
        <title>Quantitative phosphoproteomic analysis of T cell receptor signaling reveals system-wide modulation of protein-protein interactions.</title>
        <authorList>
            <person name="Mayya V."/>
            <person name="Lundgren D.H."/>
            <person name="Hwang S.-I."/>
            <person name="Rezaul K."/>
            <person name="Wu L."/>
            <person name="Eng J.K."/>
            <person name="Rodionov V."/>
            <person name="Han D.K."/>
        </authorList>
    </citation>
    <scope>PHOSPHORYLATION [LARGE SCALE ANALYSIS] AT SER-643 AND SER-659</scope>
    <scope>IDENTIFICATION BY MASS SPECTROMETRY [LARGE SCALE ANALYSIS]</scope>
    <source>
        <tissue>Leukemic T-cell</tissue>
    </source>
</reference>
<reference key="14">
    <citation type="journal article" date="2010" name="Sci. Signal.">
        <title>Quantitative phosphoproteomics reveals widespread full phosphorylation site occupancy during mitosis.</title>
        <authorList>
            <person name="Olsen J.V."/>
            <person name="Vermeulen M."/>
            <person name="Santamaria A."/>
            <person name="Kumar C."/>
            <person name="Miller M.L."/>
            <person name="Jensen L.J."/>
            <person name="Gnad F."/>
            <person name="Cox J."/>
            <person name="Jensen T.S."/>
            <person name="Nigg E.A."/>
            <person name="Brunak S."/>
            <person name="Mann M."/>
        </authorList>
    </citation>
    <scope>PHOSPHORYLATION [LARGE SCALE ANALYSIS] AT SER-295</scope>
    <scope>IDENTIFICATION BY MASS SPECTROMETRY [LARGE SCALE ANALYSIS]</scope>
    <source>
        <tissue>Cervix carcinoma</tissue>
    </source>
</reference>
<reference key="15">
    <citation type="journal article" date="2011" name="BMC Syst. Biol.">
        <title>Initial characterization of the human central proteome.</title>
        <authorList>
            <person name="Burkard T.R."/>
            <person name="Planyavsky M."/>
            <person name="Kaupe I."/>
            <person name="Breitwieser F.P."/>
            <person name="Buerckstuemmer T."/>
            <person name="Bennett K.L."/>
            <person name="Superti-Furga G."/>
            <person name="Colinge J."/>
        </authorList>
    </citation>
    <scope>IDENTIFICATION BY MASS SPECTROMETRY [LARGE SCALE ANALYSIS]</scope>
</reference>
<reference key="16">
    <citation type="journal article" date="2011" name="Cell Metab.">
        <title>C2 domain-containing phosphoprotein CDP138 regulates GLUT4 insertion into the plasma membrane.</title>
        <authorList>
            <person name="Xie X."/>
            <person name="Gong Z."/>
            <person name="Mansuy-Aubert V."/>
            <person name="Zhou Q.L."/>
            <person name="Tatulian S.A."/>
            <person name="Sehrt D."/>
            <person name="Gnad F."/>
            <person name="Brill L.M."/>
            <person name="Motamedchaboki K."/>
            <person name="Chen Y."/>
            <person name="Czech M.P."/>
            <person name="Mann M."/>
            <person name="Kruger M."/>
            <person name="Jiang Z.Y."/>
        </authorList>
    </citation>
    <scope>FUNCTION</scope>
    <scope>PHOSPHORYLATION AT SER-197 AND SER-200</scope>
    <scope>INTERACTION WITH PHOSPHOLIPIDS</scope>
    <scope>CALCIUM-BINDING</scope>
    <scope>SUBCELLULAR LOCATION</scope>
    <scope>MUTAGENESIS OF ASP-19; ASP-26; ASP-76; ASP-78; ASP-84; SER-197 AND SER-200</scope>
    <scope>IDENTIFICATION BY MASS SPECTROMETRY</scope>
</reference>
<reference key="17">
    <citation type="journal article" date="2011" name="Sci. Signal.">
        <title>System-wide temporal characterization of the proteome and phosphoproteome of human embryonic stem cell differentiation.</title>
        <authorList>
            <person name="Rigbolt K.T."/>
            <person name="Prokhorova T.A."/>
            <person name="Akimov V."/>
            <person name="Henningsen J."/>
            <person name="Johansen P.T."/>
            <person name="Kratchmarova I."/>
            <person name="Kassem M."/>
            <person name="Mann M."/>
            <person name="Olsen J.V."/>
            <person name="Blagoev B."/>
        </authorList>
    </citation>
    <scope>PHOSPHORYLATION [LARGE SCALE ANALYSIS] AT SER-293; SER-295 AND SER-852</scope>
    <scope>IDENTIFICATION BY MASS SPECTROMETRY [LARGE SCALE ANALYSIS]</scope>
</reference>
<reference key="18">
    <citation type="journal article" date="2013" name="J. Proteome Res.">
        <title>Toward a comprehensive characterization of a human cancer cell phosphoproteome.</title>
        <authorList>
            <person name="Zhou H."/>
            <person name="Di Palma S."/>
            <person name="Preisinger C."/>
            <person name="Peng M."/>
            <person name="Polat A.N."/>
            <person name="Heck A.J."/>
            <person name="Mohammed S."/>
        </authorList>
    </citation>
    <scope>PHOSPHORYLATION [LARGE SCALE ANALYSIS] AT SER-260; SER-295; SER-305; SER-323; SER-659; SER-662; THR-807 AND SER-852</scope>
    <scope>IDENTIFICATION BY MASS SPECTROMETRY [LARGE SCALE ANALYSIS]</scope>
    <source>
        <tissue>Cervix carcinoma</tissue>
        <tissue>Erythroleukemia</tissue>
    </source>
</reference>
<reference key="19">
    <citation type="journal article" date="2014" name="J. Proteomics">
        <title>An enzyme assisted RP-RPLC approach for in-depth analysis of human liver phosphoproteome.</title>
        <authorList>
            <person name="Bian Y."/>
            <person name="Song C."/>
            <person name="Cheng K."/>
            <person name="Dong M."/>
            <person name="Wang F."/>
            <person name="Huang J."/>
            <person name="Sun D."/>
            <person name="Wang L."/>
            <person name="Ye M."/>
            <person name="Zou H."/>
        </authorList>
    </citation>
    <scope>PHOSPHORYLATION [LARGE SCALE ANALYSIS] AT THR-666 AND SER-671</scope>
    <scope>IDENTIFICATION BY MASS SPECTROMETRY [LARGE SCALE ANALYSIS]</scope>
    <source>
        <tissue>Liver</tissue>
    </source>
</reference>
<keyword id="KW-0025">Alternative splicing</keyword>
<keyword id="KW-0106">Calcium</keyword>
<keyword id="KW-1003">Cell membrane</keyword>
<keyword id="KW-0966">Cell projection</keyword>
<keyword id="KW-0963">Cytoplasm</keyword>
<keyword id="KW-0968">Cytoplasmic vesicle</keyword>
<keyword id="KW-0446">Lipid-binding</keyword>
<keyword id="KW-0472">Membrane</keyword>
<keyword id="KW-0479">Metal-binding</keyword>
<keyword id="KW-0597">Phosphoprotein</keyword>
<keyword id="KW-0653">Protein transport</keyword>
<keyword id="KW-1267">Proteomics identification</keyword>
<keyword id="KW-1185">Reference proteome</keyword>
<keyword id="KW-0813">Transport</keyword>
<accession>Q86YS7</accession>
<accession>B4DJ03</accession>
<accession>B4DRN7</accession>
<accession>B7ZLL0</accession>
<accession>F5H2A1</accession>
<accession>F5H5R1</accession>
<accession>O60280</accession>
<accession>Q17RY7</accession>
<accession>Q7Z619</accession>
<accession>Q86SU3</accession>
<organism>
    <name type="scientific">Homo sapiens</name>
    <name type="common">Human</name>
    <dbReference type="NCBI Taxonomy" id="9606"/>
    <lineage>
        <taxon>Eukaryota</taxon>
        <taxon>Metazoa</taxon>
        <taxon>Chordata</taxon>
        <taxon>Craniata</taxon>
        <taxon>Vertebrata</taxon>
        <taxon>Euteleostomi</taxon>
        <taxon>Mammalia</taxon>
        <taxon>Eutheria</taxon>
        <taxon>Euarchontoglires</taxon>
        <taxon>Primates</taxon>
        <taxon>Haplorrhini</taxon>
        <taxon>Catarrhini</taxon>
        <taxon>Hominidae</taxon>
        <taxon>Homo</taxon>
    </lineage>
</organism>